<accession>A8GLS1</accession>
<feature type="chain" id="PRO_1000049856" description="3-hydroxyacyl-[acyl-carrier-protein] dehydratase FabZ">
    <location>
        <begin position="1"/>
        <end position="145"/>
    </location>
</feature>
<feature type="active site" evidence="1">
    <location>
        <position position="49"/>
    </location>
</feature>
<gene>
    <name evidence="1" type="primary">fabZ</name>
    <name type="ordered locus">A1C_00045</name>
</gene>
<name>FABZ_RICAH</name>
<keyword id="KW-0963">Cytoplasm</keyword>
<keyword id="KW-0441">Lipid A biosynthesis</keyword>
<keyword id="KW-0444">Lipid biosynthesis</keyword>
<keyword id="KW-0443">Lipid metabolism</keyword>
<keyword id="KW-0456">Lyase</keyword>
<comment type="function">
    <text evidence="1">Involved in unsaturated fatty acids biosynthesis. Catalyzes the dehydration of short chain beta-hydroxyacyl-ACPs and long chain saturated and unsaturated beta-hydroxyacyl-ACPs.</text>
</comment>
<comment type="catalytic activity">
    <reaction evidence="1">
        <text>a (3R)-hydroxyacyl-[ACP] = a (2E)-enoyl-[ACP] + H2O</text>
        <dbReference type="Rhea" id="RHEA:13097"/>
        <dbReference type="Rhea" id="RHEA-COMP:9925"/>
        <dbReference type="Rhea" id="RHEA-COMP:9945"/>
        <dbReference type="ChEBI" id="CHEBI:15377"/>
        <dbReference type="ChEBI" id="CHEBI:78784"/>
        <dbReference type="ChEBI" id="CHEBI:78827"/>
        <dbReference type="EC" id="4.2.1.59"/>
    </reaction>
</comment>
<comment type="subcellular location">
    <subcellularLocation>
        <location evidence="1">Cytoplasm</location>
    </subcellularLocation>
</comment>
<comment type="similarity">
    <text evidence="1">Belongs to the thioester dehydratase family. FabZ subfamily.</text>
</comment>
<proteinExistence type="inferred from homology"/>
<dbReference type="EC" id="4.2.1.59" evidence="1"/>
<dbReference type="EMBL" id="CP000847">
    <property type="protein sequence ID" value="ABV74346.1"/>
    <property type="molecule type" value="Genomic_DNA"/>
</dbReference>
<dbReference type="RefSeq" id="WP_012013216.1">
    <property type="nucleotide sequence ID" value="NC_009881.1"/>
</dbReference>
<dbReference type="SMR" id="A8GLS1"/>
<dbReference type="STRING" id="293614.A1C_00045"/>
<dbReference type="KEGG" id="rak:A1C_00045"/>
<dbReference type="eggNOG" id="COG0764">
    <property type="taxonomic scope" value="Bacteria"/>
</dbReference>
<dbReference type="HOGENOM" id="CLU_078912_1_2_5"/>
<dbReference type="Proteomes" id="UP000006830">
    <property type="component" value="Chromosome"/>
</dbReference>
<dbReference type="GO" id="GO:0005737">
    <property type="term" value="C:cytoplasm"/>
    <property type="evidence" value="ECO:0007669"/>
    <property type="project" value="UniProtKB-SubCell"/>
</dbReference>
<dbReference type="GO" id="GO:0016020">
    <property type="term" value="C:membrane"/>
    <property type="evidence" value="ECO:0007669"/>
    <property type="project" value="GOC"/>
</dbReference>
<dbReference type="GO" id="GO:0019171">
    <property type="term" value="F:(3R)-hydroxyacyl-[acyl-carrier-protein] dehydratase activity"/>
    <property type="evidence" value="ECO:0007669"/>
    <property type="project" value="UniProtKB-EC"/>
</dbReference>
<dbReference type="GO" id="GO:0006633">
    <property type="term" value="P:fatty acid biosynthetic process"/>
    <property type="evidence" value="ECO:0007669"/>
    <property type="project" value="UniProtKB-UniRule"/>
</dbReference>
<dbReference type="GO" id="GO:0009245">
    <property type="term" value="P:lipid A biosynthetic process"/>
    <property type="evidence" value="ECO:0007669"/>
    <property type="project" value="UniProtKB-UniRule"/>
</dbReference>
<dbReference type="CDD" id="cd01288">
    <property type="entry name" value="FabZ"/>
    <property type="match status" value="1"/>
</dbReference>
<dbReference type="FunFam" id="3.10.129.10:FF:000001">
    <property type="entry name" value="3-hydroxyacyl-[acyl-carrier-protein] dehydratase FabZ"/>
    <property type="match status" value="1"/>
</dbReference>
<dbReference type="Gene3D" id="3.10.129.10">
    <property type="entry name" value="Hotdog Thioesterase"/>
    <property type="match status" value="1"/>
</dbReference>
<dbReference type="HAMAP" id="MF_00406">
    <property type="entry name" value="FabZ"/>
    <property type="match status" value="1"/>
</dbReference>
<dbReference type="InterPro" id="IPR013114">
    <property type="entry name" value="FabA_FabZ"/>
</dbReference>
<dbReference type="InterPro" id="IPR010084">
    <property type="entry name" value="FabZ"/>
</dbReference>
<dbReference type="InterPro" id="IPR029069">
    <property type="entry name" value="HotDog_dom_sf"/>
</dbReference>
<dbReference type="NCBIfam" id="TIGR01750">
    <property type="entry name" value="fabZ"/>
    <property type="match status" value="1"/>
</dbReference>
<dbReference type="NCBIfam" id="NF000582">
    <property type="entry name" value="PRK00006.1"/>
    <property type="match status" value="1"/>
</dbReference>
<dbReference type="PANTHER" id="PTHR30272">
    <property type="entry name" value="3-HYDROXYACYL-[ACYL-CARRIER-PROTEIN] DEHYDRATASE"/>
    <property type="match status" value="1"/>
</dbReference>
<dbReference type="PANTHER" id="PTHR30272:SF1">
    <property type="entry name" value="3-HYDROXYACYL-[ACYL-CARRIER-PROTEIN] DEHYDRATASE"/>
    <property type="match status" value="1"/>
</dbReference>
<dbReference type="Pfam" id="PF07977">
    <property type="entry name" value="FabA"/>
    <property type="match status" value="1"/>
</dbReference>
<dbReference type="SUPFAM" id="SSF54637">
    <property type="entry name" value="Thioesterase/thiol ester dehydrase-isomerase"/>
    <property type="match status" value="1"/>
</dbReference>
<protein>
    <recommendedName>
        <fullName evidence="1">3-hydroxyacyl-[acyl-carrier-protein] dehydratase FabZ</fullName>
        <ecNumber evidence="1">4.2.1.59</ecNumber>
    </recommendedName>
    <alternativeName>
        <fullName evidence="1">(3R)-hydroxymyristoyl-[acyl-carrier-protein] dehydratase</fullName>
        <shortName evidence="1">(3R)-hydroxymyristoyl-ACP dehydrase</shortName>
    </alternativeName>
    <alternativeName>
        <fullName evidence="1">Beta-hydroxyacyl-ACP dehydratase</fullName>
    </alternativeName>
</protein>
<reference key="1">
    <citation type="submission" date="2007-09" db="EMBL/GenBank/DDBJ databases">
        <title>Complete genome sequence of Rickettsia akari.</title>
        <authorList>
            <person name="Madan A."/>
            <person name="Fahey J."/>
            <person name="Helton E."/>
            <person name="Ketteman M."/>
            <person name="Madan A."/>
            <person name="Rodrigues S."/>
            <person name="Sanchez A."/>
            <person name="Whiting M."/>
            <person name="Dasch G."/>
            <person name="Eremeeva M."/>
        </authorList>
    </citation>
    <scope>NUCLEOTIDE SEQUENCE [LARGE SCALE GENOMIC DNA]</scope>
    <source>
        <strain>Hartford</strain>
    </source>
</reference>
<organism>
    <name type="scientific">Rickettsia akari (strain Hartford)</name>
    <dbReference type="NCBI Taxonomy" id="293614"/>
    <lineage>
        <taxon>Bacteria</taxon>
        <taxon>Pseudomonadati</taxon>
        <taxon>Pseudomonadota</taxon>
        <taxon>Alphaproteobacteria</taxon>
        <taxon>Rickettsiales</taxon>
        <taxon>Rickettsiaceae</taxon>
        <taxon>Rickettsieae</taxon>
        <taxon>Rickettsia</taxon>
        <taxon>spotted fever group</taxon>
    </lineage>
</organism>
<sequence>MIIDITEIMDLIPHRYPFLLVDRVLEIDLNKSILGIKNVTVNEPQFTGHFPTRPVMPGVLMVEAMAQIAAILVAKSLGSTKNKDVFLMAIENAKFRRIVQPGDTMHIHAVIDQQRTNVWKFSSTVTVEGEMAAESKFTAMIKDKS</sequence>
<evidence type="ECO:0000255" key="1">
    <source>
        <dbReference type="HAMAP-Rule" id="MF_00406"/>
    </source>
</evidence>